<gene>
    <name type="primary">trpB1</name>
    <name type="ordered locus">aq_706</name>
</gene>
<accession>O66923</accession>
<sequence length="397" mass="43543">MYNYPDERGYFGPFGGKFVPETLMYALEELEEKYRELKSDPEFQKELDYYLREYAGRPTPLYFAEKLTKYVGGAKIYLKREDLLHTGAHKINNTIGQCLLTKRMGKKRVIAETGAGQHGVATATASALFGLECVVYMGEEDAERQALNVFRMKLLGAKVEIVKSGSRTLKDAINEALRDWVTNVESTHYVIGSVVGPHPFPMIVRDFQSVIGRETKEQILQKEGRLPDAIVACVGGGSNAMGIFYPFVEDKGVQLIGVEAGGYGLETGQHAASICGGSVGILHGMKSYFLQDEEGQIQPTHSISAGLDYPGVGPEHALFHEIKRAKYTTATDEEALEGFKLLARTEGIIPALESAHAVIKAVEVARELGKDGIVVINLSGRGDKDMAHVMKHLSLEG</sequence>
<protein>
    <recommendedName>
        <fullName>Tryptophan synthase beta chain 1</fullName>
        <ecNumber>4.2.1.20</ecNumber>
    </recommendedName>
</protein>
<reference key="1">
    <citation type="journal article" date="1998" name="Nature">
        <title>The complete genome of the hyperthermophilic bacterium Aquifex aeolicus.</title>
        <authorList>
            <person name="Deckert G."/>
            <person name="Warren P.V."/>
            <person name="Gaasterland T."/>
            <person name="Young W.G."/>
            <person name="Lenox A.L."/>
            <person name="Graham D.E."/>
            <person name="Overbeek R."/>
            <person name="Snead M.A."/>
            <person name="Keller M."/>
            <person name="Aujay M."/>
            <person name="Huber R."/>
            <person name="Feldman R.A."/>
            <person name="Short J.M."/>
            <person name="Olsen G.J."/>
            <person name="Swanson R.V."/>
        </authorList>
    </citation>
    <scope>NUCLEOTIDE SEQUENCE [LARGE SCALE GENOMIC DNA]</scope>
    <source>
        <strain>VF5</strain>
    </source>
</reference>
<comment type="function">
    <text evidence="1">The beta subunit is responsible for the synthesis of L-tryptophan from indole and L-serine.</text>
</comment>
<comment type="catalytic activity">
    <reaction>
        <text>(1S,2R)-1-C-(indol-3-yl)glycerol 3-phosphate + L-serine = D-glyceraldehyde 3-phosphate + L-tryptophan + H2O</text>
        <dbReference type="Rhea" id="RHEA:10532"/>
        <dbReference type="ChEBI" id="CHEBI:15377"/>
        <dbReference type="ChEBI" id="CHEBI:33384"/>
        <dbReference type="ChEBI" id="CHEBI:57912"/>
        <dbReference type="ChEBI" id="CHEBI:58866"/>
        <dbReference type="ChEBI" id="CHEBI:59776"/>
        <dbReference type="EC" id="4.2.1.20"/>
    </reaction>
</comment>
<comment type="cofactor">
    <cofactor evidence="1">
        <name>pyridoxal 5'-phosphate</name>
        <dbReference type="ChEBI" id="CHEBI:597326"/>
    </cofactor>
</comment>
<comment type="pathway">
    <text>Amino-acid biosynthesis; L-tryptophan biosynthesis; L-tryptophan from chorismate: step 5/5.</text>
</comment>
<comment type="subunit">
    <text evidence="1">Tetramer of two alpha and two beta chains.</text>
</comment>
<comment type="similarity">
    <text evidence="2">Belongs to the TrpB family.</text>
</comment>
<dbReference type="EC" id="4.2.1.20"/>
<dbReference type="EMBL" id="AE000657">
    <property type="protein sequence ID" value="AAC06880.1"/>
    <property type="molecule type" value="Genomic_DNA"/>
</dbReference>
<dbReference type="PIR" id="G70361">
    <property type="entry name" value="G70361"/>
</dbReference>
<dbReference type="RefSeq" id="NP_213483.1">
    <property type="nucleotide sequence ID" value="NC_000918.1"/>
</dbReference>
<dbReference type="RefSeq" id="WP_010880421.1">
    <property type="nucleotide sequence ID" value="NC_000918.1"/>
</dbReference>
<dbReference type="SMR" id="O66923"/>
<dbReference type="FunCoup" id="O66923">
    <property type="interactions" value="457"/>
</dbReference>
<dbReference type="STRING" id="224324.aq_706"/>
<dbReference type="EnsemblBacteria" id="AAC06880">
    <property type="protein sequence ID" value="AAC06880"/>
    <property type="gene ID" value="aq_706"/>
</dbReference>
<dbReference type="KEGG" id="aae:aq_706"/>
<dbReference type="PATRIC" id="fig|224324.8.peg.565"/>
<dbReference type="eggNOG" id="COG0133">
    <property type="taxonomic scope" value="Bacteria"/>
</dbReference>
<dbReference type="HOGENOM" id="CLU_016734_3_1_0"/>
<dbReference type="InParanoid" id="O66923"/>
<dbReference type="OrthoDB" id="9766131at2"/>
<dbReference type="UniPathway" id="UPA00035">
    <property type="reaction ID" value="UER00044"/>
</dbReference>
<dbReference type="Proteomes" id="UP000000798">
    <property type="component" value="Chromosome"/>
</dbReference>
<dbReference type="GO" id="GO:0005737">
    <property type="term" value="C:cytoplasm"/>
    <property type="evidence" value="ECO:0000318"/>
    <property type="project" value="GO_Central"/>
</dbReference>
<dbReference type="GO" id="GO:0004834">
    <property type="term" value="F:tryptophan synthase activity"/>
    <property type="evidence" value="ECO:0007669"/>
    <property type="project" value="UniProtKB-UniRule"/>
</dbReference>
<dbReference type="GO" id="GO:0000162">
    <property type="term" value="P:L-tryptophan biosynthetic process"/>
    <property type="evidence" value="ECO:0000318"/>
    <property type="project" value="GO_Central"/>
</dbReference>
<dbReference type="CDD" id="cd06446">
    <property type="entry name" value="Trp-synth_B"/>
    <property type="match status" value="1"/>
</dbReference>
<dbReference type="FunFam" id="3.40.50.1100:FF:000001">
    <property type="entry name" value="Tryptophan synthase beta chain"/>
    <property type="match status" value="1"/>
</dbReference>
<dbReference type="FunFam" id="3.40.50.1100:FF:000004">
    <property type="entry name" value="Tryptophan synthase beta chain"/>
    <property type="match status" value="1"/>
</dbReference>
<dbReference type="Gene3D" id="3.40.50.1100">
    <property type="match status" value="2"/>
</dbReference>
<dbReference type="HAMAP" id="MF_00133">
    <property type="entry name" value="Trp_synth_beta"/>
    <property type="match status" value="1"/>
</dbReference>
<dbReference type="InterPro" id="IPR006653">
    <property type="entry name" value="Trp_synth_b_CS"/>
</dbReference>
<dbReference type="InterPro" id="IPR006654">
    <property type="entry name" value="Trp_synth_beta"/>
</dbReference>
<dbReference type="InterPro" id="IPR023026">
    <property type="entry name" value="Trp_synth_beta/beta-like"/>
</dbReference>
<dbReference type="InterPro" id="IPR001926">
    <property type="entry name" value="TrpB-like_PALP"/>
</dbReference>
<dbReference type="InterPro" id="IPR036052">
    <property type="entry name" value="TrpB-like_PALP_sf"/>
</dbReference>
<dbReference type="NCBIfam" id="TIGR00263">
    <property type="entry name" value="trpB"/>
    <property type="match status" value="1"/>
</dbReference>
<dbReference type="PANTHER" id="PTHR48077:SF3">
    <property type="entry name" value="TRYPTOPHAN SYNTHASE"/>
    <property type="match status" value="1"/>
</dbReference>
<dbReference type="PANTHER" id="PTHR48077">
    <property type="entry name" value="TRYPTOPHAN SYNTHASE-RELATED"/>
    <property type="match status" value="1"/>
</dbReference>
<dbReference type="Pfam" id="PF00291">
    <property type="entry name" value="PALP"/>
    <property type="match status" value="1"/>
</dbReference>
<dbReference type="PIRSF" id="PIRSF001413">
    <property type="entry name" value="Trp_syn_beta"/>
    <property type="match status" value="1"/>
</dbReference>
<dbReference type="SUPFAM" id="SSF53686">
    <property type="entry name" value="Tryptophan synthase beta subunit-like PLP-dependent enzymes"/>
    <property type="match status" value="1"/>
</dbReference>
<dbReference type="PROSITE" id="PS00168">
    <property type="entry name" value="TRP_SYNTHASE_BETA"/>
    <property type="match status" value="1"/>
</dbReference>
<evidence type="ECO:0000250" key="1"/>
<evidence type="ECO:0000305" key="2"/>
<feature type="chain" id="PRO_0000098912" description="Tryptophan synthase beta chain 1">
    <location>
        <begin position="1"/>
        <end position="397"/>
    </location>
</feature>
<feature type="modified residue" description="N6-(pyridoxal phosphate)lysine" evidence="1">
    <location>
        <position position="90"/>
    </location>
</feature>
<organism>
    <name type="scientific">Aquifex aeolicus (strain VF5)</name>
    <dbReference type="NCBI Taxonomy" id="224324"/>
    <lineage>
        <taxon>Bacteria</taxon>
        <taxon>Pseudomonadati</taxon>
        <taxon>Aquificota</taxon>
        <taxon>Aquificia</taxon>
        <taxon>Aquificales</taxon>
        <taxon>Aquificaceae</taxon>
        <taxon>Aquifex</taxon>
    </lineage>
</organism>
<proteinExistence type="inferred from homology"/>
<name>TRPB1_AQUAE</name>
<keyword id="KW-0028">Amino-acid biosynthesis</keyword>
<keyword id="KW-0057">Aromatic amino acid biosynthesis</keyword>
<keyword id="KW-0456">Lyase</keyword>
<keyword id="KW-0663">Pyridoxal phosphate</keyword>
<keyword id="KW-1185">Reference proteome</keyword>
<keyword id="KW-0822">Tryptophan biosynthesis</keyword>